<name>PURE_METJA</name>
<comment type="function">
    <text evidence="1">Catalyzes the conversion of N5-carboxyaminoimidazole ribonucleotide (N5-CAIR) to 4-carboxy-5-aminoimidazole ribonucleotide (CAIR).</text>
</comment>
<comment type="catalytic activity">
    <reaction evidence="1">
        <text>5-carboxyamino-1-(5-phospho-D-ribosyl)imidazole + H(+) = 5-amino-1-(5-phospho-D-ribosyl)imidazole-4-carboxylate</text>
        <dbReference type="Rhea" id="RHEA:13193"/>
        <dbReference type="ChEBI" id="CHEBI:15378"/>
        <dbReference type="ChEBI" id="CHEBI:58730"/>
        <dbReference type="ChEBI" id="CHEBI:77657"/>
        <dbReference type="EC" id="5.4.99.18"/>
    </reaction>
</comment>
<comment type="pathway">
    <text evidence="1">Purine metabolism; IMP biosynthesis via de novo pathway; 5-amino-1-(5-phospho-D-ribosyl)imidazole-4-carboxylate from 5-amino-1-(5-phospho-D-ribosyl)imidazole (N5-CAIR route): step 2/2.</text>
</comment>
<comment type="similarity">
    <text evidence="1">Belongs to the AIR carboxylase family. Class I subfamily.</text>
</comment>
<feature type="chain" id="PRO_0000074987" description="N5-carboxyaminoimidazole ribonucleotide mutase">
    <location>
        <begin position="1"/>
        <end position="157"/>
    </location>
</feature>
<feature type="binding site" evidence="1">
    <location>
        <position position="8"/>
    </location>
    <ligand>
        <name>substrate</name>
    </ligand>
</feature>
<feature type="binding site" evidence="1">
    <location>
        <position position="11"/>
    </location>
    <ligand>
        <name>substrate</name>
    </ligand>
</feature>
<feature type="binding site" evidence="1">
    <location>
        <position position="38"/>
    </location>
    <ligand>
        <name>substrate</name>
    </ligand>
</feature>
<feature type="strand" evidence="2">
    <location>
        <begin position="2"/>
        <end position="8"/>
    </location>
</feature>
<feature type="helix" evidence="2">
    <location>
        <begin position="9"/>
        <end position="11"/>
    </location>
</feature>
<feature type="helix" evidence="2">
    <location>
        <begin position="12"/>
        <end position="24"/>
    </location>
</feature>
<feature type="strand" evidence="2">
    <location>
        <begin position="29"/>
        <end position="33"/>
    </location>
</feature>
<feature type="turn" evidence="2">
    <location>
        <begin position="36"/>
        <end position="38"/>
    </location>
</feature>
<feature type="helix" evidence="2">
    <location>
        <begin position="40"/>
        <end position="49"/>
    </location>
</feature>
<feature type="strand" evidence="2">
    <location>
        <begin position="53"/>
        <end position="62"/>
    </location>
</feature>
<feature type="helix" evidence="2">
    <location>
        <begin position="65"/>
        <end position="70"/>
    </location>
</feature>
<feature type="strand" evidence="2">
    <location>
        <begin position="77"/>
        <end position="82"/>
    </location>
</feature>
<feature type="helix" evidence="2">
    <location>
        <begin position="86"/>
        <end position="88"/>
    </location>
</feature>
<feature type="helix" evidence="2">
    <location>
        <begin position="89"/>
        <end position="96"/>
    </location>
</feature>
<feature type="helix" evidence="2">
    <location>
        <begin position="112"/>
        <end position="123"/>
    </location>
</feature>
<feature type="turn" evidence="2">
    <location>
        <begin position="124"/>
        <end position="126"/>
    </location>
</feature>
<feature type="helix" evidence="2">
    <location>
        <begin position="128"/>
        <end position="153"/>
    </location>
</feature>
<gene>
    <name evidence="1" type="primary">purE</name>
    <name type="ordered locus">MJ0616</name>
</gene>
<proteinExistence type="evidence at protein level"/>
<dbReference type="EC" id="5.4.99.18" evidence="1"/>
<dbReference type="EMBL" id="L77117">
    <property type="protein sequence ID" value="AAB98611.1"/>
    <property type="molecule type" value="Genomic_DNA"/>
</dbReference>
<dbReference type="PIR" id="H64376">
    <property type="entry name" value="H64376"/>
</dbReference>
<dbReference type="RefSeq" id="WP_010870121.1">
    <property type="nucleotide sequence ID" value="NC_000909.1"/>
</dbReference>
<dbReference type="PDB" id="2YWX">
    <property type="method" value="X-ray"/>
    <property type="resolution" value="2.31 A"/>
    <property type="chains" value="A=1-157"/>
</dbReference>
<dbReference type="PDBsum" id="2YWX"/>
<dbReference type="SMR" id="Q58033"/>
<dbReference type="FunCoup" id="Q58033">
    <property type="interactions" value="12"/>
</dbReference>
<dbReference type="STRING" id="243232.MJ_0616"/>
<dbReference type="PaxDb" id="243232-MJ_0616"/>
<dbReference type="EnsemblBacteria" id="AAB98611">
    <property type="protein sequence ID" value="AAB98611"/>
    <property type="gene ID" value="MJ_0616"/>
</dbReference>
<dbReference type="GeneID" id="1451482"/>
<dbReference type="KEGG" id="mja:MJ_0616"/>
<dbReference type="eggNOG" id="arCOG02464">
    <property type="taxonomic scope" value="Archaea"/>
</dbReference>
<dbReference type="HOGENOM" id="CLU_094982_2_0_2"/>
<dbReference type="InParanoid" id="Q58033"/>
<dbReference type="OrthoDB" id="9473at2157"/>
<dbReference type="PhylomeDB" id="Q58033"/>
<dbReference type="UniPathway" id="UPA00074">
    <property type="reaction ID" value="UER00943"/>
</dbReference>
<dbReference type="EvolutionaryTrace" id="Q58033"/>
<dbReference type="Proteomes" id="UP000000805">
    <property type="component" value="Chromosome"/>
</dbReference>
<dbReference type="GO" id="GO:0034023">
    <property type="term" value="F:5-(carboxyamino)imidazole ribonucleotide mutase activity"/>
    <property type="evidence" value="ECO:0007669"/>
    <property type="project" value="UniProtKB-UniRule"/>
</dbReference>
<dbReference type="GO" id="GO:0006189">
    <property type="term" value="P:'de novo' IMP biosynthetic process"/>
    <property type="evidence" value="ECO:0007669"/>
    <property type="project" value="UniProtKB-UniRule"/>
</dbReference>
<dbReference type="Gene3D" id="3.40.50.1970">
    <property type="match status" value="1"/>
</dbReference>
<dbReference type="HAMAP" id="MF_01929">
    <property type="entry name" value="PurE_classI"/>
    <property type="match status" value="1"/>
</dbReference>
<dbReference type="InterPro" id="IPR033747">
    <property type="entry name" value="PurE_ClassI"/>
</dbReference>
<dbReference type="InterPro" id="IPR000031">
    <property type="entry name" value="PurE_dom"/>
</dbReference>
<dbReference type="InterPro" id="IPR024694">
    <property type="entry name" value="PurE_prokaryotes"/>
</dbReference>
<dbReference type="NCBIfam" id="TIGR01162">
    <property type="entry name" value="purE"/>
    <property type="match status" value="1"/>
</dbReference>
<dbReference type="PANTHER" id="PTHR23046:SF2">
    <property type="entry name" value="PHOSPHORIBOSYLAMINOIMIDAZOLE CARBOXYLASE"/>
    <property type="match status" value="1"/>
</dbReference>
<dbReference type="PANTHER" id="PTHR23046">
    <property type="entry name" value="PHOSPHORIBOSYLAMINOIMIDAZOLE CARBOXYLASE CATALYTIC SUBUNIT"/>
    <property type="match status" value="1"/>
</dbReference>
<dbReference type="Pfam" id="PF00731">
    <property type="entry name" value="AIRC"/>
    <property type="match status" value="1"/>
</dbReference>
<dbReference type="PIRSF" id="PIRSF001338">
    <property type="entry name" value="AIR_carboxylase"/>
    <property type="match status" value="1"/>
</dbReference>
<dbReference type="SMART" id="SM01001">
    <property type="entry name" value="AIRC"/>
    <property type="match status" value="1"/>
</dbReference>
<dbReference type="SUPFAM" id="SSF52255">
    <property type="entry name" value="N5-CAIR mutase (phosphoribosylaminoimidazole carboxylase, PurE)"/>
    <property type="match status" value="1"/>
</dbReference>
<reference key="1">
    <citation type="journal article" date="1996" name="Science">
        <title>Complete genome sequence of the methanogenic archaeon, Methanococcus jannaschii.</title>
        <authorList>
            <person name="Bult C.J."/>
            <person name="White O."/>
            <person name="Olsen G.J."/>
            <person name="Zhou L."/>
            <person name="Fleischmann R.D."/>
            <person name="Sutton G.G."/>
            <person name="Blake J.A."/>
            <person name="FitzGerald L.M."/>
            <person name="Clayton R.A."/>
            <person name="Gocayne J.D."/>
            <person name="Kerlavage A.R."/>
            <person name="Dougherty B.A."/>
            <person name="Tomb J.-F."/>
            <person name="Adams M.D."/>
            <person name="Reich C.I."/>
            <person name="Overbeek R."/>
            <person name="Kirkness E.F."/>
            <person name="Weinstock K.G."/>
            <person name="Merrick J.M."/>
            <person name="Glodek A."/>
            <person name="Scott J.L."/>
            <person name="Geoghagen N.S.M."/>
            <person name="Weidman J.F."/>
            <person name="Fuhrmann J.L."/>
            <person name="Nguyen D."/>
            <person name="Utterback T.R."/>
            <person name="Kelley J.M."/>
            <person name="Peterson J.D."/>
            <person name="Sadow P.W."/>
            <person name="Hanna M.C."/>
            <person name="Cotton M.D."/>
            <person name="Roberts K.M."/>
            <person name="Hurst M.A."/>
            <person name="Kaine B.P."/>
            <person name="Borodovsky M."/>
            <person name="Klenk H.-P."/>
            <person name="Fraser C.M."/>
            <person name="Smith H.O."/>
            <person name="Woese C.R."/>
            <person name="Venter J.C."/>
        </authorList>
    </citation>
    <scope>NUCLEOTIDE SEQUENCE [LARGE SCALE GENOMIC DNA]</scope>
    <source>
        <strain>ATCC 43067 / DSM 2661 / JAL-1 / JCM 10045 / NBRC 100440</strain>
    </source>
</reference>
<organism>
    <name type="scientific">Methanocaldococcus jannaschii (strain ATCC 43067 / DSM 2661 / JAL-1 / JCM 10045 / NBRC 100440)</name>
    <name type="common">Methanococcus jannaschii</name>
    <dbReference type="NCBI Taxonomy" id="243232"/>
    <lineage>
        <taxon>Archaea</taxon>
        <taxon>Methanobacteriati</taxon>
        <taxon>Methanobacteriota</taxon>
        <taxon>Methanomada group</taxon>
        <taxon>Methanococci</taxon>
        <taxon>Methanococcales</taxon>
        <taxon>Methanocaldococcaceae</taxon>
        <taxon>Methanocaldococcus</taxon>
    </lineage>
</organism>
<evidence type="ECO:0000255" key="1">
    <source>
        <dbReference type="HAMAP-Rule" id="MF_01929"/>
    </source>
</evidence>
<evidence type="ECO:0007829" key="2">
    <source>
        <dbReference type="PDB" id="2YWX"/>
    </source>
</evidence>
<accession>Q58033</accession>
<protein>
    <recommendedName>
        <fullName evidence="1">N5-carboxyaminoimidazole ribonucleotide mutase</fullName>
        <shortName evidence="1">N5-CAIR mutase</shortName>
        <ecNumber evidence="1">5.4.99.18</ecNumber>
    </recommendedName>
    <alternativeName>
        <fullName evidence="1">5-(carboxyamino)imidazole ribonucleotide mutase</fullName>
    </alternativeName>
</protein>
<keyword id="KW-0002">3D-structure</keyword>
<keyword id="KW-0413">Isomerase</keyword>
<keyword id="KW-0658">Purine biosynthesis</keyword>
<keyword id="KW-1185">Reference proteome</keyword>
<sequence>MICIIMGSESDLKIAEKAVNILKEFGVEFEVRVASAHRTPELVEEIVKNSKADVFIAIAGLAAHLPGVVASLTTKPVIAVPVDAKLDGLDALLSSVQMPPGIPVATVGIDRGENAAILALEILALKDENIAKKLIEYREKMKKKVYASDEKVKEMFK</sequence>